<protein>
    <recommendedName>
        <fullName evidence="1">S-adenosylmethionine decarboxylase proenzyme</fullName>
        <shortName evidence="1">AdoMetDC</shortName>
        <shortName evidence="1">SAMDC</shortName>
        <ecNumber evidence="1">4.1.1.50</ecNumber>
    </recommendedName>
    <component>
        <recommendedName>
            <fullName evidence="1">S-adenosylmethionine decarboxylase beta chain</fullName>
        </recommendedName>
    </component>
    <component>
        <recommendedName>
            <fullName evidence="1">S-adenosylmethionine decarboxylase alpha chain</fullName>
        </recommendedName>
    </component>
</protein>
<accession>A1JJM7</accession>
<name>SPED_YERE8</name>
<evidence type="ECO:0000255" key="1">
    <source>
        <dbReference type="HAMAP-Rule" id="MF_00465"/>
    </source>
</evidence>
<gene>
    <name evidence="1" type="primary">speD</name>
    <name type="ordered locus">YE0709</name>
</gene>
<dbReference type="EC" id="4.1.1.50" evidence="1"/>
<dbReference type="EMBL" id="AM286415">
    <property type="protein sequence ID" value="CAL10814.1"/>
    <property type="molecule type" value="Genomic_DNA"/>
</dbReference>
<dbReference type="RefSeq" id="WP_005156788.1">
    <property type="nucleotide sequence ID" value="NC_008800.1"/>
</dbReference>
<dbReference type="RefSeq" id="YP_001005054.1">
    <property type="nucleotide sequence ID" value="NC_008800.1"/>
</dbReference>
<dbReference type="GeneID" id="31411865"/>
<dbReference type="KEGG" id="yen:YE0709"/>
<dbReference type="PATRIC" id="fig|393305.7.peg.803"/>
<dbReference type="eggNOG" id="COG1586">
    <property type="taxonomic scope" value="Bacteria"/>
</dbReference>
<dbReference type="HOGENOM" id="CLU_092007_0_0_6"/>
<dbReference type="OrthoDB" id="5290709at2"/>
<dbReference type="UniPathway" id="UPA00331">
    <property type="reaction ID" value="UER00451"/>
</dbReference>
<dbReference type="Proteomes" id="UP000000642">
    <property type="component" value="Chromosome"/>
</dbReference>
<dbReference type="GO" id="GO:0005829">
    <property type="term" value="C:cytosol"/>
    <property type="evidence" value="ECO:0007669"/>
    <property type="project" value="TreeGrafter"/>
</dbReference>
<dbReference type="GO" id="GO:0004014">
    <property type="term" value="F:adenosylmethionine decarboxylase activity"/>
    <property type="evidence" value="ECO:0007669"/>
    <property type="project" value="UniProtKB-UniRule"/>
</dbReference>
<dbReference type="GO" id="GO:0008295">
    <property type="term" value="P:spermidine biosynthetic process"/>
    <property type="evidence" value="ECO:0007669"/>
    <property type="project" value="UniProtKB-UniRule"/>
</dbReference>
<dbReference type="FunFam" id="3.60.90.10:FF:000001">
    <property type="entry name" value="S-adenosylmethionine decarboxylase proenzyme"/>
    <property type="match status" value="1"/>
</dbReference>
<dbReference type="Gene3D" id="3.60.90.10">
    <property type="entry name" value="S-adenosylmethionine decarboxylase"/>
    <property type="match status" value="1"/>
</dbReference>
<dbReference type="HAMAP" id="MF_00465">
    <property type="entry name" value="AdoMetDC_2"/>
    <property type="match status" value="1"/>
</dbReference>
<dbReference type="InterPro" id="IPR003826">
    <property type="entry name" value="AdoMetDC_fam_prok"/>
</dbReference>
<dbReference type="InterPro" id="IPR009165">
    <property type="entry name" value="S-AdoMet_deCO2ase_bac"/>
</dbReference>
<dbReference type="InterPro" id="IPR016067">
    <property type="entry name" value="S-AdoMet_deCO2ase_core"/>
</dbReference>
<dbReference type="NCBIfam" id="TIGR03331">
    <property type="entry name" value="SAM_DCase_Eco"/>
    <property type="match status" value="1"/>
</dbReference>
<dbReference type="PANTHER" id="PTHR33866">
    <property type="entry name" value="S-ADENOSYLMETHIONINE DECARBOXYLASE PROENZYME"/>
    <property type="match status" value="1"/>
</dbReference>
<dbReference type="PANTHER" id="PTHR33866:SF1">
    <property type="entry name" value="S-ADENOSYLMETHIONINE DECARBOXYLASE PROENZYME"/>
    <property type="match status" value="1"/>
</dbReference>
<dbReference type="Pfam" id="PF02675">
    <property type="entry name" value="AdoMet_dc"/>
    <property type="match status" value="1"/>
</dbReference>
<dbReference type="PIRSF" id="PIRSF001356">
    <property type="entry name" value="SAM_decarboxylas"/>
    <property type="match status" value="1"/>
</dbReference>
<dbReference type="SUPFAM" id="SSF56276">
    <property type="entry name" value="S-adenosylmethionine decarboxylase"/>
    <property type="match status" value="1"/>
</dbReference>
<feature type="chain" id="PRO_1000013693" description="S-adenosylmethionine decarboxylase beta chain" evidence="1">
    <location>
        <begin position="1"/>
        <end position="111"/>
    </location>
</feature>
<feature type="chain" id="PRO_0000315019" description="S-adenosylmethionine decarboxylase alpha chain" evidence="1">
    <location>
        <begin position="112"/>
        <end position="264"/>
    </location>
</feature>
<feature type="active site" description="Schiff-base intermediate with substrate; via pyruvic acid" evidence="1">
    <location>
        <position position="112"/>
    </location>
</feature>
<feature type="active site" description="Proton acceptor; for processing activity" evidence="1">
    <location>
        <position position="117"/>
    </location>
</feature>
<feature type="active site" description="Proton donor; for catalytic activity" evidence="1">
    <location>
        <position position="140"/>
    </location>
</feature>
<feature type="site" description="Cleavage (non-hydrolytic); by autolysis" evidence="1">
    <location>
        <begin position="111"/>
        <end position="112"/>
    </location>
</feature>
<feature type="modified residue" description="Pyruvic acid (Ser); by autocatalysis" evidence="1">
    <location>
        <position position="112"/>
    </location>
</feature>
<sequence length="264" mass="30330">MSKLKLHGFNNLTKSLSFCIYDICYAKTADDRDGYIAYIDEQYNANRLTEILTETCSIIGANILNIARQDYDPQGASVTILVSEEPVDPRDVDTSEHPGPLPSAVVAHLDKSHICVHTYPESHPEGGLCTFRADIEVSTCGVISPLKALNYLIHQLESDIVTMDYRVRGFTRDINGVKHFIDHKINSIQNFMSDDMKSLYHMMDVNVYQENIFHTKMMLKDFDLKHYLFNAKPEELSAEERERITHLLYKEMQEIYYGRNVPEV</sequence>
<reference key="1">
    <citation type="journal article" date="2006" name="PLoS Genet.">
        <title>The complete genome sequence and comparative genome analysis of the high pathogenicity Yersinia enterocolitica strain 8081.</title>
        <authorList>
            <person name="Thomson N.R."/>
            <person name="Howard S."/>
            <person name="Wren B.W."/>
            <person name="Holden M.T.G."/>
            <person name="Crossman L."/>
            <person name="Challis G.L."/>
            <person name="Churcher C."/>
            <person name="Mungall K."/>
            <person name="Brooks K."/>
            <person name="Chillingworth T."/>
            <person name="Feltwell T."/>
            <person name="Abdellah Z."/>
            <person name="Hauser H."/>
            <person name="Jagels K."/>
            <person name="Maddison M."/>
            <person name="Moule S."/>
            <person name="Sanders M."/>
            <person name="Whitehead S."/>
            <person name="Quail M.A."/>
            <person name="Dougan G."/>
            <person name="Parkhill J."/>
            <person name="Prentice M.B."/>
        </authorList>
    </citation>
    <scope>NUCLEOTIDE SEQUENCE [LARGE SCALE GENOMIC DNA]</scope>
    <source>
        <strain>NCTC 13174 / 8081</strain>
    </source>
</reference>
<keyword id="KW-0068">Autocatalytic cleavage</keyword>
<keyword id="KW-0210">Decarboxylase</keyword>
<keyword id="KW-0456">Lyase</keyword>
<keyword id="KW-0620">Polyamine biosynthesis</keyword>
<keyword id="KW-0670">Pyruvate</keyword>
<keyword id="KW-0949">S-adenosyl-L-methionine</keyword>
<keyword id="KW-0704">Schiff base</keyword>
<keyword id="KW-0745">Spermidine biosynthesis</keyword>
<keyword id="KW-0865">Zymogen</keyword>
<organism>
    <name type="scientific">Yersinia enterocolitica serotype O:8 / biotype 1B (strain NCTC 13174 / 8081)</name>
    <dbReference type="NCBI Taxonomy" id="393305"/>
    <lineage>
        <taxon>Bacteria</taxon>
        <taxon>Pseudomonadati</taxon>
        <taxon>Pseudomonadota</taxon>
        <taxon>Gammaproteobacteria</taxon>
        <taxon>Enterobacterales</taxon>
        <taxon>Yersiniaceae</taxon>
        <taxon>Yersinia</taxon>
    </lineage>
</organism>
<proteinExistence type="inferred from homology"/>
<comment type="function">
    <text evidence="1">Catalyzes the decarboxylation of S-adenosylmethionine to S-adenosylmethioninamine (dcAdoMet), the propylamine donor required for the synthesis of the polyamines spermine and spermidine from the diamine putrescine.</text>
</comment>
<comment type="catalytic activity">
    <reaction evidence="1">
        <text>S-adenosyl-L-methionine + H(+) = S-adenosyl 3-(methylsulfanyl)propylamine + CO2</text>
        <dbReference type="Rhea" id="RHEA:15981"/>
        <dbReference type="ChEBI" id="CHEBI:15378"/>
        <dbReference type="ChEBI" id="CHEBI:16526"/>
        <dbReference type="ChEBI" id="CHEBI:57443"/>
        <dbReference type="ChEBI" id="CHEBI:59789"/>
        <dbReference type="EC" id="4.1.1.50"/>
    </reaction>
</comment>
<comment type="cofactor">
    <cofactor evidence="1">
        <name>pyruvate</name>
        <dbReference type="ChEBI" id="CHEBI:15361"/>
    </cofactor>
    <text evidence="1">Binds 1 pyruvoyl group covalently per subunit.</text>
</comment>
<comment type="pathway">
    <text evidence="1">Amine and polyamine biosynthesis; S-adenosylmethioninamine biosynthesis; S-adenosylmethioninamine from S-adenosyl-L-methionine: step 1/1.</text>
</comment>
<comment type="subunit">
    <text evidence="1">Heterooctamer of four alpha and four beta chains arranged as a tetramer of alpha/beta heterodimers.</text>
</comment>
<comment type="PTM">
    <text evidence="1">Is synthesized initially as an inactive proenzyme. Formation of the active enzyme involves a self-maturation process in which the active site pyruvoyl group is generated from an internal serine residue via an autocatalytic post-translational modification. Two non-identical subunits are generated from the proenzyme in this reaction, and the pyruvate is formed at the N-terminus of the alpha chain, which is derived from the carboxyl end of the proenzyme. The post-translation cleavage follows an unusual pathway, termed non-hydrolytic serinolysis, in which the side chain hydroxyl group of the serine supplies its oxygen atom to form the C-terminus of the beta chain, while the remainder of the serine residue undergoes an oxidative deamination to produce ammonia and the pyruvoyl group blocking the N-terminus of the alpha chain.</text>
</comment>
<comment type="similarity">
    <text evidence="1">Belongs to the prokaryotic AdoMetDC family. Type 2 subfamily.</text>
</comment>